<sequence length="455" mass="48753">MISVFDIFKIGIGPSSSHTVGPMKAGKQFTDDLIARNLLKDVTRVVVDVYGSLSLTGKGHHTDIAIIMGLAGNLPDTVDIDSIPSFIQDVNTHGRLMLANGQHEVEFPVDQCMNFHADNLSLHENGMRITALAGDKVVYSQTYYSIGGGFIVDEEHFGQQDSAPVEVPYPYSSAADLQKHCQETGLSLSGLMMKNELALHSKEELEQHLANVWEVMRGGIERGISTEGVLPGKLRVPRRAAALRRMLVSQDKTTTDPMAVVDWINMFALAVNEENAAGGRVVTAPTNGACGIIPAVLAYYDKFIREVNANSLARYLLVASAIGSLYKMNASISGAEVGCQGEVGVACSMAAAGLAELLGASPAQVCIAAEIAMEHNLGLTCDPVAGQVQVPCIERNAIAAVKAVNAARMALRRTSEPRVCLDKVIETMYETGKDMNAKYRETSRGGLAMKIVACD</sequence>
<protein>
    <recommendedName>
        <fullName>L-serine dehydratase 2</fullName>
        <shortName>SDH 2</shortName>
        <ecNumber>4.3.1.17</ecNumber>
    </recommendedName>
    <alternativeName>
        <fullName>L-serine deaminase 2</fullName>
        <shortName>L-SD2</shortName>
    </alternativeName>
</protein>
<organism>
    <name type="scientific">Escherichia coli (strain K12)</name>
    <dbReference type="NCBI Taxonomy" id="83333"/>
    <lineage>
        <taxon>Bacteria</taxon>
        <taxon>Pseudomonadati</taxon>
        <taxon>Pseudomonadota</taxon>
        <taxon>Gammaproteobacteria</taxon>
        <taxon>Enterobacterales</taxon>
        <taxon>Enterobacteriaceae</taxon>
        <taxon>Escherichia</taxon>
    </lineage>
</organism>
<proteinExistence type="evidence at transcript level"/>
<evidence type="ECO:0000269" key="1">
    <source>
    </source>
</evidence>
<evidence type="ECO:0000305" key="2"/>
<keyword id="KW-0004">4Fe-4S</keyword>
<keyword id="KW-0312">Gluconeogenesis</keyword>
<keyword id="KW-0408">Iron</keyword>
<keyword id="KW-0411">Iron-sulfur</keyword>
<keyword id="KW-0456">Lyase</keyword>
<keyword id="KW-0479">Metal-binding</keyword>
<keyword id="KW-1185">Reference proteome</keyword>
<feature type="chain" id="PRO_0000171904" description="L-serine dehydratase 2">
    <location>
        <begin position="1"/>
        <end position="455"/>
    </location>
</feature>
<feature type="sequence conflict" description="In Ref. 1." evidence="2" ref="1">
    <original>L</original>
    <variation>V</variation>
    <location>
        <position position="132"/>
    </location>
</feature>
<feature type="sequence conflict" description="In Ref. 1." evidence="2" ref="1">
    <original>G</original>
    <variation>A</variation>
    <location>
        <position position="134"/>
    </location>
</feature>
<feature type="sequence conflict" description="In Ref. 1." evidence="2" ref="1">
    <original>EL</original>
    <variation>DV</variation>
    <location>
        <begin position="196"/>
        <end position="197"/>
    </location>
</feature>
<feature type="sequence conflict" description="In Ref. 1." evidence="2" ref="1">
    <original>VPRR</original>
    <variation>STPC</variation>
    <location>
        <begin position="236"/>
        <end position="239"/>
    </location>
</feature>
<feature type="sequence conflict" description="In Ref. 1." evidence="2" ref="1">
    <original>ASP</original>
    <variation>GNR</variation>
    <location>
        <begin position="360"/>
        <end position="362"/>
    </location>
</feature>
<feature type="sequence conflict" description="In Ref. 1." evidence="2" ref="1">
    <original>A</original>
    <variation>G</variation>
    <location>
        <position position="372"/>
    </location>
</feature>
<reference key="1">
    <citation type="journal article" date="1993" name="Eur. J. Biochem.">
        <title>Sequencing and characterization of the sdaB gene from Escherichia coli K-12.</title>
        <authorList>
            <person name="Shao Z."/>
            <person name="Newman E.B."/>
        </authorList>
    </citation>
    <scope>NUCLEOTIDE SEQUENCE [GENOMIC DNA]</scope>
    <source>
        <strain>K12</strain>
    </source>
</reference>
<reference key="2">
    <citation type="journal article" date="1997" name="Science">
        <title>The complete genome sequence of Escherichia coli K-12.</title>
        <authorList>
            <person name="Blattner F.R."/>
            <person name="Plunkett G. III"/>
            <person name="Bloch C.A."/>
            <person name="Perna N.T."/>
            <person name="Burland V."/>
            <person name="Riley M."/>
            <person name="Collado-Vides J."/>
            <person name="Glasner J.D."/>
            <person name="Rode C.K."/>
            <person name="Mayhew G.F."/>
            <person name="Gregor J."/>
            <person name="Davis N.W."/>
            <person name="Kirkpatrick H.A."/>
            <person name="Goeden M.A."/>
            <person name="Rose D.J."/>
            <person name="Mau B."/>
            <person name="Shao Y."/>
        </authorList>
    </citation>
    <scope>NUCLEOTIDE SEQUENCE [LARGE SCALE GENOMIC DNA]</scope>
    <source>
        <strain>K12 / MG1655 / ATCC 47076</strain>
    </source>
</reference>
<reference key="3">
    <citation type="journal article" date="2006" name="Mol. Syst. Biol.">
        <title>Highly accurate genome sequences of Escherichia coli K-12 strains MG1655 and W3110.</title>
        <authorList>
            <person name="Hayashi K."/>
            <person name="Morooka N."/>
            <person name="Yamamoto Y."/>
            <person name="Fujita K."/>
            <person name="Isono K."/>
            <person name="Choi S."/>
            <person name="Ohtsubo E."/>
            <person name="Baba T."/>
            <person name="Wanner B.L."/>
            <person name="Mori H."/>
            <person name="Horiuchi T."/>
        </authorList>
    </citation>
    <scope>NUCLEOTIDE SEQUENCE [LARGE SCALE GENOMIC DNA]</scope>
    <source>
        <strain>K12 / W3110 / ATCC 27325 / DSM 5911</strain>
    </source>
</reference>
<reference key="4">
    <citation type="journal article" date="2009" name="J. Bacteriol.">
        <title>Involvement of the leucine response transcription factor LeuO in regulation of the genes for sulfa drug efflux.</title>
        <authorList>
            <person name="Shimada T."/>
            <person name="Yamamoto K."/>
            <person name="Ishihama A."/>
        </authorList>
    </citation>
    <scope>OPERON STRUCTURE</scope>
    <scope>INDUCTION</scope>
    <source>
        <strain>K12 / BW25113</strain>
    </source>
</reference>
<comment type="function">
    <text>Also deaminates threonine, particularly when it is present in high concentration.</text>
</comment>
<comment type="catalytic activity">
    <reaction>
        <text>L-serine = pyruvate + NH4(+)</text>
        <dbReference type="Rhea" id="RHEA:19169"/>
        <dbReference type="ChEBI" id="CHEBI:15361"/>
        <dbReference type="ChEBI" id="CHEBI:28938"/>
        <dbReference type="ChEBI" id="CHEBI:33384"/>
        <dbReference type="EC" id="4.3.1.17"/>
    </reaction>
</comment>
<comment type="cofactor">
    <cofactor evidence="2">
        <name>[4Fe-4S] cluster</name>
        <dbReference type="ChEBI" id="CHEBI:49883"/>
    </cofactor>
    <text evidence="2">Binds 1 [4Fe-4S] cluster.</text>
</comment>
<comment type="pathway">
    <text>Carbohydrate biosynthesis; gluconeogenesis.</text>
</comment>
<comment type="induction">
    <text evidence="1">Transcribed in rich medium, particularly in the absence of glucose, and is under the control of catabolite activator protein. It is made aerobically and anaerobically. Repressed by LeuO. Part of the sdaCB operon.</text>
</comment>
<comment type="PTM">
    <text>Activated by post-translational modification by a system involving at least three gene products. Activation is mimicked in vitro by iron and dithiothreitol. There is considerable evidence for a free-radical activation mechanism.</text>
</comment>
<comment type="similarity">
    <text evidence="2">Belongs to the iron-sulfur dependent L-serine dehydratase family.</text>
</comment>
<dbReference type="EC" id="4.3.1.17"/>
<dbReference type="EMBL" id="L07763">
    <property type="status" value="NOT_ANNOTATED_CDS"/>
    <property type="molecule type" value="Genomic_DNA"/>
</dbReference>
<dbReference type="EMBL" id="U29581">
    <property type="protein sequence ID" value="AAB40447.1"/>
    <property type="molecule type" value="Genomic_DNA"/>
</dbReference>
<dbReference type="EMBL" id="U00096">
    <property type="protein sequence ID" value="AAC75839.1"/>
    <property type="molecule type" value="Genomic_DNA"/>
</dbReference>
<dbReference type="EMBL" id="AP009048">
    <property type="protein sequence ID" value="BAE76869.1"/>
    <property type="molecule type" value="Genomic_DNA"/>
</dbReference>
<dbReference type="PIR" id="A65062">
    <property type="entry name" value="A65062"/>
</dbReference>
<dbReference type="RefSeq" id="NP_417277.1">
    <property type="nucleotide sequence ID" value="NC_000913.3"/>
</dbReference>
<dbReference type="RefSeq" id="WP_000626422.1">
    <property type="nucleotide sequence ID" value="NZ_LN832404.1"/>
</dbReference>
<dbReference type="SMR" id="P30744"/>
<dbReference type="BioGRID" id="4261306">
    <property type="interactions" value="11"/>
</dbReference>
<dbReference type="FunCoup" id="P30744">
    <property type="interactions" value="243"/>
</dbReference>
<dbReference type="IntAct" id="P30744">
    <property type="interactions" value="2"/>
</dbReference>
<dbReference type="STRING" id="511145.b2797"/>
<dbReference type="jPOST" id="P30744"/>
<dbReference type="PaxDb" id="511145-b2797"/>
<dbReference type="EnsemblBacteria" id="AAC75839">
    <property type="protein sequence ID" value="AAC75839"/>
    <property type="gene ID" value="b2797"/>
</dbReference>
<dbReference type="GeneID" id="947262"/>
<dbReference type="KEGG" id="ecj:JW2768"/>
<dbReference type="KEGG" id="eco:b2797"/>
<dbReference type="KEGG" id="ecoc:C3026_15380"/>
<dbReference type="PATRIC" id="fig|1411691.4.peg.3936"/>
<dbReference type="EchoBASE" id="EB1580"/>
<dbReference type="eggNOG" id="COG1760">
    <property type="taxonomic scope" value="Bacteria"/>
</dbReference>
<dbReference type="HOGENOM" id="CLU_022305_0_1_6"/>
<dbReference type="InParanoid" id="P30744"/>
<dbReference type="OMA" id="SAAMGGC"/>
<dbReference type="OrthoDB" id="9805537at2"/>
<dbReference type="PhylomeDB" id="P30744"/>
<dbReference type="BioCyc" id="EcoCyc:LSERINEDEAM2-MONOMER"/>
<dbReference type="BioCyc" id="MetaCyc:LSERINEDEAM2-MONOMER"/>
<dbReference type="BRENDA" id="4.3.1.17">
    <property type="organism ID" value="2026"/>
</dbReference>
<dbReference type="UniPathway" id="UPA00138"/>
<dbReference type="PRO" id="PR:P30744"/>
<dbReference type="Proteomes" id="UP000000625">
    <property type="component" value="Chromosome"/>
</dbReference>
<dbReference type="GO" id="GO:0051539">
    <property type="term" value="F:4 iron, 4 sulfur cluster binding"/>
    <property type="evidence" value="ECO:0007669"/>
    <property type="project" value="UniProtKB-KW"/>
</dbReference>
<dbReference type="GO" id="GO:0003941">
    <property type="term" value="F:L-serine ammonia-lyase activity"/>
    <property type="evidence" value="ECO:0000314"/>
    <property type="project" value="EcoCyc"/>
</dbReference>
<dbReference type="GO" id="GO:0046872">
    <property type="term" value="F:metal ion binding"/>
    <property type="evidence" value="ECO:0007669"/>
    <property type="project" value="UniProtKB-KW"/>
</dbReference>
<dbReference type="GO" id="GO:0006094">
    <property type="term" value="P:gluconeogenesis"/>
    <property type="evidence" value="ECO:0007669"/>
    <property type="project" value="UniProtKB-UniPathway"/>
</dbReference>
<dbReference type="GO" id="GO:0006565">
    <property type="term" value="P:L-serine catabolic process"/>
    <property type="evidence" value="ECO:0000314"/>
    <property type="project" value="EcoCyc"/>
</dbReference>
<dbReference type="FunFam" id="3.30.1330.90:FF:000001">
    <property type="entry name" value="L-serine ammonia-lyase 1"/>
    <property type="match status" value="1"/>
</dbReference>
<dbReference type="Gene3D" id="3.30.1330.90">
    <property type="entry name" value="D-3-phosphoglycerate dehydrogenase, domain 3"/>
    <property type="match status" value="1"/>
</dbReference>
<dbReference type="InterPro" id="IPR029009">
    <property type="entry name" value="ASB_dom_sf"/>
</dbReference>
<dbReference type="InterPro" id="IPR051318">
    <property type="entry name" value="Fe-S_L-Ser"/>
</dbReference>
<dbReference type="InterPro" id="IPR004644">
    <property type="entry name" value="Fe-S_L-Ser_mono"/>
</dbReference>
<dbReference type="InterPro" id="IPR005130">
    <property type="entry name" value="Ser_deHydtase-like_asu"/>
</dbReference>
<dbReference type="InterPro" id="IPR005131">
    <property type="entry name" value="Ser_deHydtase_bsu"/>
</dbReference>
<dbReference type="NCBIfam" id="TIGR00720">
    <property type="entry name" value="sda_mono"/>
    <property type="match status" value="1"/>
</dbReference>
<dbReference type="PANTHER" id="PTHR30182">
    <property type="entry name" value="L-SERINE DEHYDRATASE"/>
    <property type="match status" value="1"/>
</dbReference>
<dbReference type="PANTHER" id="PTHR30182:SF14">
    <property type="entry name" value="L-SERINE DEHYDRATASE 2"/>
    <property type="match status" value="1"/>
</dbReference>
<dbReference type="Pfam" id="PF03313">
    <property type="entry name" value="SDH_alpha"/>
    <property type="match status" value="1"/>
</dbReference>
<dbReference type="Pfam" id="PF03315">
    <property type="entry name" value="SDH_beta"/>
    <property type="match status" value="1"/>
</dbReference>
<dbReference type="SUPFAM" id="SSF143548">
    <property type="entry name" value="Serine metabolism enzymes domain"/>
    <property type="match status" value="1"/>
</dbReference>
<name>SDHM_ECOLI</name>
<accession>P30744</accession>
<accession>Q2MA37</accession>
<accession>Q59377</accession>
<gene>
    <name type="primary">sdaB</name>
    <name type="ordered locus">b2797</name>
    <name type="ordered locus">JW2768</name>
</gene>